<dbReference type="EMBL" id="X55317">
    <property type="protein sequence ID" value="CAA39025.1"/>
    <property type="molecule type" value="Genomic_DNA"/>
</dbReference>
<dbReference type="PIR" id="A43548">
    <property type="entry name" value="A43548"/>
</dbReference>
<dbReference type="RefSeq" id="NP_001013856.1">
    <property type="nucleotide sequence ID" value="NM_001013834.2"/>
</dbReference>
<dbReference type="FunCoup" id="P23294">
    <property type="interactions" value="146"/>
</dbReference>
<dbReference type="STRING" id="9615.ENSCAFP00000065483"/>
<dbReference type="PaxDb" id="9615-ENSCAFP00000065483"/>
<dbReference type="Ensembl" id="ENSCAFT00000028257.5">
    <property type="protein sequence ID" value="ENSCAFP00000026279.4"/>
    <property type="gene ID" value="ENSCAFG00000017811.5"/>
</dbReference>
<dbReference type="Ensembl" id="ENSCAFT00030039698.1">
    <property type="protein sequence ID" value="ENSCAFP00030034642.1"/>
    <property type="gene ID" value="ENSCAFG00030021594.1"/>
</dbReference>
<dbReference type="Ensembl" id="ENSCAFT00040039507.1">
    <property type="protein sequence ID" value="ENSCAFP00040034471.1"/>
    <property type="gene ID" value="ENSCAFG00040021257.1"/>
</dbReference>
<dbReference type="Ensembl" id="ENSCAFT00845042032.1">
    <property type="protein sequence ID" value="ENSCAFP00845032966.1"/>
    <property type="gene ID" value="ENSCAFG00845023800.1"/>
</dbReference>
<dbReference type="GeneID" id="481002"/>
<dbReference type="KEGG" id="cfa:481002"/>
<dbReference type="CTD" id="5354"/>
<dbReference type="VEuPathDB" id="HostDB:ENSCAFG00845023800"/>
<dbReference type="VGNC" id="VGNC:44704">
    <property type="gene designation" value="PLP1"/>
</dbReference>
<dbReference type="GeneTree" id="ENSGT00390000006915"/>
<dbReference type="InParanoid" id="P23294"/>
<dbReference type="OrthoDB" id="9993736at2759"/>
<dbReference type="Proteomes" id="UP000002254">
    <property type="component" value="Chromosome X"/>
</dbReference>
<dbReference type="Proteomes" id="UP000694429">
    <property type="component" value="Unassembled WGS sequence"/>
</dbReference>
<dbReference type="Proteomes" id="UP000694542">
    <property type="component" value="Chromosome X"/>
</dbReference>
<dbReference type="Proteomes" id="UP000805418">
    <property type="component" value="Chromosome X"/>
</dbReference>
<dbReference type="Bgee" id="ENSCAFG00000017811">
    <property type="expression patterns" value="Expressed in prefrontal cortex and 43 other cell types or tissues"/>
</dbReference>
<dbReference type="GO" id="GO:0043209">
    <property type="term" value="C:myelin sheath"/>
    <property type="evidence" value="ECO:0000318"/>
    <property type="project" value="GO_Central"/>
</dbReference>
<dbReference type="GO" id="GO:0005886">
    <property type="term" value="C:plasma membrane"/>
    <property type="evidence" value="ECO:0000250"/>
    <property type="project" value="UniProtKB"/>
</dbReference>
<dbReference type="GO" id="GO:0019911">
    <property type="term" value="F:structural constituent of myelin sheath"/>
    <property type="evidence" value="ECO:0000318"/>
    <property type="project" value="GO_Central"/>
</dbReference>
<dbReference type="GO" id="GO:0014002">
    <property type="term" value="P:astrocyte development"/>
    <property type="evidence" value="ECO:0007669"/>
    <property type="project" value="Ensembl"/>
</dbReference>
<dbReference type="GO" id="GO:0061564">
    <property type="term" value="P:axon development"/>
    <property type="evidence" value="ECO:0000318"/>
    <property type="project" value="GO_Central"/>
</dbReference>
<dbReference type="GO" id="GO:0022010">
    <property type="term" value="P:central nervous system myelination"/>
    <property type="evidence" value="ECO:0000318"/>
    <property type="project" value="GO_Central"/>
</dbReference>
<dbReference type="GO" id="GO:0006954">
    <property type="term" value="P:inflammatory response"/>
    <property type="evidence" value="ECO:0007669"/>
    <property type="project" value="Ensembl"/>
</dbReference>
<dbReference type="GO" id="GO:0042759">
    <property type="term" value="P:long-chain fatty acid biosynthetic process"/>
    <property type="evidence" value="ECO:0007669"/>
    <property type="project" value="Ensembl"/>
</dbReference>
<dbReference type="GO" id="GO:0010628">
    <property type="term" value="P:positive regulation of gene expression"/>
    <property type="evidence" value="ECO:0007669"/>
    <property type="project" value="Ensembl"/>
</dbReference>
<dbReference type="InterPro" id="IPR001614">
    <property type="entry name" value="Myelin_PLP"/>
</dbReference>
<dbReference type="InterPro" id="IPR018237">
    <property type="entry name" value="Myelin_PLP_CS"/>
</dbReference>
<dbReference type="PANTHER" id="PTHR11683">
    <property type="entry name" value="MYELIN PROTEOLIPID"/>
    <property type="match status" value="1"/>
</dbReference>
<dbReference type="PANTHER" id="PTHR11683:SF11">
    <property type="entry name" value="MYELIN PROTEOLIPID PROTEIN"/>
    <property type="match status" value="1"/>
</dbReference>
<dbReference type="Pfam" id="PF01275">
    <property type="entry name" value="Myelin_PLP"/>
    <property type="match status" value="1"/>
</dbReference>
<dbReference type="PRINTS" id="PR00214">
    <property type="entry name" value="MYELINPLP"/>
</dbReference>
<dbReference type="SMART" id="SM00002">
    <property type="entry name" value="PLP"/>
    <property type="match status" value="1"/>
</dbReference>
<dbReference type="PROSITE" id="PS00575">
    <property type="entry name" value="MYELIN_PLP_1"/>
    <property type="match status" value="1"/>
</dbReference>
<dbReference type="PROSITE" id="PS01004">
    <property type="entry name" value="MYELIN_PLP_2"/>
    <property type="match status" value="1"/>
</dbReference>
<keyword id="KW-1003">Cell membrane</keyword>
<keyword id="KW-0225">Disease variant</keyword>
<keyword id="KW-1015">Disulfide bond</keyword>
<keyword id="KW-0449">Lipoprotein</keyword>
<keyword id="KW-0472">Membrane</keyword>
<keyword id="KW-0564">Palmitate</keyword>
<keyword id="KW-0597">Phosphoprotein</keyword>
<keyword id="KW-1185">Reference proteome</keyword>
<keyword id="KW-0812">Transmembrane</keyword>
<keyword id="KW-1133">Transmembrane helix</keyword>
<accession>P23294</accession>
<reference key="1">
    <citation type="journal article" date="1990" name="Development">
        <title>A point mutation in the proteolipid protein gene of the 'shaking pup' interrupts oligodendrocyte development.</title>
        <authorList>
            <person name="Nadon N.L."/>
            <person name="Duncan I.D."/>
            <person name="Hudson L.D."/>
        </authorList>
    </citation>
    <scope>NUCLEOTIDE SEQUENCE [GENOMIC DNA]</scope>
    <scope>VARIANT PRO-37</scope>
</reference>
<sequence>MGLLECCARCLVGAPFASLVATGLCFFGVALFCGCGHEALTGTEKLIETYFSKNYQDYEYLINVIHAFQYVIYGTASFFFLYGALLLAEGFYTTGAVRQIFGDYKTTICGKGLSATVTGGQKGRGSRGQHQAHSLERVCHCLGKWLGHPDKFVGITYALTIVWLLVFACSAVPVYIYFNTWTTCQSIAFPSKTSASIGSLCADARMYGVLPWNAFPGKVCGSNLLSICKTAEFQMTFHLFIAAFVGAAATLVSLLTFMIAATYNFAVLKLMGRGTKF</sequence>
<comment type="function">
    <text>This is the major myelin protein from the central nervous system. It plays an important role in the formation or maintenance of the multilamellar structure of myelin.</text>
</comment>
<comment type="subcellular location">
    <subcellularLocation>
        <location evidence="1">Cell membrane</location>
        <topology evidence="1">Multi-pass membrane protein</topology>
    </subcellularLocation>
    <subcellularLocation>
        <location>Myelin membrane</location>
    </subcellularLocation>
    <text evidence="1">Colocalizes with SIRT2 in internodal regions, at paranodal axoglial junction and Schmidt-Lanterman incisures of myelin sheat.</text>
</comment>
<comment type="disease">
    <text>Defects in PLP1 are the cause of 'shaking pup' disease; a dysmyelinating disease.</text>
</comment>
<comment type="similarity">
    <text evidence="5">Belongs to the myelin proteolipid protein family.</text>
</comment>
<name>MYPR_CANLF</name>
<organism>
    <name type="scientific">Canis lupus familiaris</name>
    <name type="common">Dog</name>
    <name type="synonym">Canis familiaris</name>
    <dbReference type="NCBI Taxonomy" id="9615"/>
    <lineage>
        <taxon>Eukaryota</taxon>
        <taxon>Metazoa</taxon>
        <taxon>Chordata</taxon>
        <taxon>Craniata</taxon>
        <taxon>Vertebrata</taxon>
        <taxon>Euteleostomi</taxon>
        <taxon>Mammalia</taxon>
        <taxon>Eutheria</taxon>
        <taxon>Laurasiatheria</taxon>
        <taxon>Carnivora</taxon>
        <taxon>Caniformia</taxon>
        <taxon>Canidae</taxon>
        <taxon>Canis</taxon>
    </lineage>
</organism>
<protein>
    <recommendedName>
        <fullName>Myelin proteolipid protein</fullName>
        <shortName>PLP</shortName>
    </recommendedName>
    <alternativeName>
        <fullName>Lipophilin</fullName>
    </alternativeName>
</protein>
<evidence type="ECO:0000250" key="1"/>
<evidence type="ECO:0000250" key="2">
    <source>
        <dbReference type="UniProtKB" id="P60203"/>
    </source>
</evidence>
<evidence type="ECO:0000255" key="3"/>
<evidence type="ECO:0000269" key="4">
    <source>
    </source>
</evidence>
<evidence type="ECO:0000305" key="5"/>
<feature type="chain" id="PRO_0000159004" description="Myelin proteolipid protein">
    <location>
        <begin position="1"/>
        <end position="277"/>
    </location>
</feature>
<feature type="topological domain" description="Cytoplasmic" evidence="3">
    <location>
        <begin position="1"/>
        <end position="10"/>
    </location>
</feature>
<feature type="transmembrane region" description="Helical; Name=1" evidence="3">
    <location>
        <begin position="11"/>
        <end position="36"/>
    </location>
</feature>
<feature type="topological domain" description="Extracellular" evidence="3">
    <location>
        <begin position="37"/>
        <end position="59"/>
    </location>
</feature>
<feature type="transmembrane region" description="Helical; Name=2" evidence="3">
    <location>
        <begin position="60"/>
        <end position="88"/>
    </location>
</feature>
<feature type="topological domain" description="Cytoplasmic" evidence="3">
    <location>
        <begin position="89"/>
        <end position="151"/>
    </location>
</feature>
<feature type="transmembrane region" description="Helical; Name=3" evidence="3">
    <location>
        <begin position="152"/>
        <end position="178"/>
    </location>
</feature>
<feature type="topological domain" description="Extracellular" evidence="3">
    <location>
        <begin position="179"/>
        <end position="238"/>
    </location>
</feature>
<feature type="transmembrane region" description="Helical; Name=4" evidence="3">
    <location>
        <begin position="239"/>
        <end position="268"/>
    </location>
</feature>
<feature type="topological domain" description="Cytoplasmic" evidence="3">
    <location>
        <begin position="269"/>
        <end position="277"/>
    </location>
</feature>
<feature type="modified residue" description="Phosphoserine" evidence="2">
    <location>
        <position position="114"/>
    </location>
</feature>
<feature type="modified residue" description="Phosphothreonine" evidence="2">
    <location>
        <position position="116"/>
    </location>
</feature>
<feature type="modified residue" description="Phosphothreonine" evidence="2">
    <location>
        <position position="118"/>
    </location>
</feature>
<feature type="lipid moiety-binding region" description="S-palmitoyl cysteine" evidence="1">
    <location>
        <position position="6"/>
    </location>
</feature>
<feature type="lipid moiety-binding region" description="S-palmitoyl cysteine" evidence="1">
    <location>
        <position position="7"/>
    </location>
</feature>
<feature type="lipid moiety-binding region" description="S-palmitoyl cysteine" evidence="1">
    <location>
        <position position="10"/>
    </location>
</feature>
<feature type="lipid moiety-binding region" description="S-palmitoyl cysteine" evidence="1">
    <location>
        <position position="109"/>
    </location>
</feature>
<feature type="lipid moiety-binding region" description="S-palmitoyl cysteine" evidence="1">
    <location>
        <position position="139"/>
    </location>
</feature>
<feature type="lipid moiety-binding region" description="S-palmitoyl cysteine" evidence="1">
    <location>
        <position position="141"/>
    </location>
</feature>
<feature type="lipid moiety-binding region" description="O-palmitoyl serine" evidence="1">
    <location>
        <position position="199"/>
    </location>
</feature>
<feature type="disulfide bond" evidence="1">
    <location>
        <begin position="184"/>
        <end position="228"/>
    </location>
</feature>
<feature type="disulfide bond" evidence="1">
    <location>
        <begin position="201"/>
        <end position="220"/>
    </location>
</feature>
<feature type="sequence variant" description="In shaking pup." evidence="4">
    <original>H</original>
    <variation>P</variation>
    <location>
        <position position="37"/>
    </location>
</feature>
<gene>
    <name type="primary">PLP1</name>
    <name type="synonym">PLP</name>
</gene>
<proteinExistence type="evidence at protein level"/>